<sequence length="178" mass="20576">MSGGKYIDSEGLLYSAPIREQGNIYKPNNKSMADEMNEKQMYDAHTKEIDLVNRDPKHLNDDMVKIDFEDVIAEPEGTHSFDGIWKASFTTFTVTKYWFYRLLSALFGIPMALIWGIYFAILSFLHIWAVVPCIRSYLIEIQCISRIYSICIHTFCDPLFEAIGKIFSNVRIALQKEI</sequence>
<dbReference type="EMBL" id="DP000023">
    <property type="protein sequence ID" value="ABB89830.1"/>
    <property type="molecule type" value="Genomic_DNA"/>
</dbReference>
<dbReference type="SMR" id="Q2QL79"/>
<dbReference type="GO" id="GO:0005901">
    <property type="term" value="C:caveola"/>
    <property type="evidence" value="ECO:0000250"/>
    <property type="project" value="UniProtKB"/>
</dbReference>
<dbReference type="GO" id="GO:0005768">
    <property type="term" value="C:endosome"/>
    <property type="evidence" value="ECO:0000250"/>
    <property type="project" value="UniProtKB"/>
</dbReference>
<dbReference type="GO" id="GO:0005925">
    <property type="term" value="C:focal adhesion"/>
    <property type="evidence" value="ECO:0007669"/>
    <property type="project" value="TreeGrafter"/>
</dbReference>
<dbReference type="GO" id="GO:0000139">
    <property type="term" value="C:Golgi membrane"/>
    <property type="evidence" value="ECO:0007669"/>
    <property type="project" value="UniProtKB-SubCell"/>
</dbReference>
<dbReference type="GO" id="GO:0045121">
    <property type="term" value="C:membrane raft"/>
    <property type="evidence" value="ECO:0000250"/>
    <property type="project" value="UniProtKB"/>
</dbReference>
<dbReference type="GO" id="GO:0048471">
    <property type="term" value="C:perinuclear region of cytoplasm"/>
    <property type="evidence" value="ECO:0007669"/>
    <property type="project" value="TreeGrafter"/>
</dbReference>
<dbReference type="GO" id="GO:0042383">
    <property type="term" value="C:sarcolemma"/>
    <property type="evidence" value="ECO:0007669"/>
    <property type="project" value="TreeGrafter"/>
</dbReference>
<dbReference type="GO" id="GO:0060090">
    <property type="term" value="F:molecular adaptor activity"/>
    <property type="evidence" value="ECO:0007669"/>
    <property type="project" value="TreeGrafter"/>
</dbReference>
<dbReference type="GO" id="GO:0008142">
    <property type="term" value="F:oxysterol binding"/>
    <property type="evidence" value="ECO:0000250"/>
    <property type="project" value="UniProtKB"/>
</dbReference>
<dbReference type="GO" id="GO:0019901">
    <property type="term" value="F:protein kinase binding"/>
    <property type="evidence" value="ECO:0007669"/>
    <property type="project" value="TreeGrafter"/>
</dbReference>
<dbReference type="GO" id="GO:0044325">
    <property type="term" value="F:transmembrane transporter binding"/>
    <property type="evidence" value="ECO:0007669"/>
    <property type="project" value="TreeGrafter"/>
</dbReference>
<dbReference type="GO" id="GO:0070836">
    <property type="term" value="P:caveola assembly"/>
    <property type="evidence" value="ECO:0007669"/>
    <property type="project" value="InterPro"/>
</dbReference>
<dbReference type="GO" id="GO:0030154">
    <property type="term" value="P:cell differentiation"/>
    <property type="evidence" value="ECO:0007669"/>
    <property type="project" value="TreeGrafter"/>
</dbReference>
<dbReference type="GO" id="GO:0001937">
    <property type="term" value="P:negative regulation of endothelial cell proliferation"/>
    <property type="evidence" value="ECO:0007669"/>
    <property type="project" value="TreeGrafter"/>
</dbReference>
<dbReference type="GO" id="GO:0031623">
    <property type="term" value="P:receptor internalization"/>
    <property type="evidence" value="ECO:0000250"/>
    <property type="project" value="UniProtKB"/>
</dbReference>
<dbReference type="GO" id="GO:0051480">
    <property type="term" value="P:regulation of cytosolic calcium ion concentration"/>
    <property type="evidence" value="ECO:0007669"/>
    <property type="project" value="TreeGrafter"/>
</dbReference>
<dbReference type="GO" id="GO:0031295">
    <property type="term" value="P:T cell costimulation"/>
    <property type="evidence" value="ECO:0000250"/>
    <property type="project" value="UniProtKB"/>
</dbReference>
<dbReference type="InterPro" id="IPR001612">
    <property type="entry name" value="Caveolin"/>
</dbReference>
<dbReference type="InterPro" id="IPR018361">
    <property type="entry name" value="Caveolin_CS"/>
</dbReference>
<dbReference type="PANTHER" id="PTHR10844">
    <property type="entry name" value="CAVEOLIN"/>
    <property type="match status" value="1"/>
</dbReference>
<dbReference type="PANTHER" id="PTHR10844:SF18">
    <property type="entry name" value="CAVEOLIN-1"/>
    <property type="match status" value="1"/>
</dbReference>
<dbReference type="Pfam" id="PF01146">
    <property type="entry name" value="Caveolin"/>
    <property type="match status" value="1"/>
</dbReference>
<dbReference type="PROSITE" id="PS01210">
    <property type="entry name" value="CAVEOLIN"/>
    <property type="match status" value="1"/>
</dbReference>
<accession>Q2QL79</accession>
<reference key="1">
    <citation type="submission" date="2005-11" db="EMBL/GenBank/DDBJ databases">
        <title>NISC comparative sequencing initiative.</title>
        <authorList>
            <person name="Antonellis A."/>
            <person name="Ayele K."/>
            <person name="Benjamin B."/>
            <person name="Blakesley R.W."/>
            <person name="Boakye A."/>
            <person name="Bouffard G.G."/>
            <person name="Brinkley C."/>
            <person name="Brooks S."/>
            <person name="Chu G."/>
            <person name="Coleman H."/>
            <person name="Engle J."/>
            <person name="Gestole M."/>
            <person name="Greene A."/>
            <person name="Guan X."/>
            <person name="Gupta J."/>
            <person name="Haghighi P."/>
            <person name="Han J."/>
            <person name="Hansen N."/>
            <person name="Ho S.-L."/>
            <person name="Hu P."/>
            <person name="Hunter G."/>
            <person name="Hurle B."/>
            <person name="Idol J.R."/>
            <person name="Kwong P."/>
            <person name="Laric P."/>
            <person name="Larson S."/>
            <person name="Lee-Lin S.-Q."/>
            <person name="Legaspi R."/>
            <person name="Madden M."/>
            <person name="Maduro Q.L."/>
            <person name="Maduro V.B."/>
            <person name="Margulies E.H."/>
            <person name="Masiello C."/>
            <person name="Maskeri B."/>
            <person name="McDowell J."/>
            <person name="Mojidi H.A."/>
            <person name="Mullikin J.C."/>
            <person name="Oestreicher J.S."/>
            <person name="Park M."/>
            <person name="Portnoy M.E."/>
            <person name="Prasad A."/>
            <person name="Puri O."/>
            <person name="Reddix-Dugue N."/>
            <person name="Schandler K."/>
            <person name="Schueler M.G."/>
            <person name="Sison C."/>
            <person name="Stantripop S."/>
            <person name="Stephen E."/>
            <person name="Taye A."/>
            <person name="Thomas J.W."/>
            <person name="Thomas P.J."/>
            <person name="Tsipouri V."/>
            <person name="Ung L."/>
            <person name="Vogt J.L."/>
            <person name="Wetherby K.D."/>
            <person name="Young A."/>
            <person name="Green E.D."/>
        </authorList>
    </citation>
    <scope>NUCLEOTIDE SEQUENCE [LARGE SCALE GENOMIC DNA]</scope>
</reference>
<gene>
    <name type="primary">CAV1</name>
</gene>
<organism>
    <name type="scientific">Didelphis virginiana</name>
    <name type="common">North American opossum</name>
    <name type="synonym">Didelphis marsupialis virginiana</name>
    <dbReference type="NCBI Taxonomy" id="9267"/>
    <lineage>
        <taxon>Eukaryota</taxon>
        <taxon>Metazoa</taxon>
        <taxon>Chordata</taxon>
        <taxon>Craniata</taxon>
        <taxon>Vertebrata</taxon>
        <taxon>Euteleostomi</taxon>
        <taxon>Mammalia</taxon>
        <taxon>Metatheria</taxon>
        <taxon>Didelphimorphia</taxon>
        <taxon>Didelphidae</taxon>
        <taxon>Didelphis</taxon>
    </lineage>
</organism>
<protein>
    <recommendedName>
        <fullName>Caveolin-1</fullName>
    </recommendedName>
</protein>
<comment type="function">
    <text evidence="3 4">May act as a scaffolding protein within caveolar membranes. Forms a stable heterooligomeric complex with CAV2 that targets to lipid rafts and drives caveolae formation. Mediates the recruitment of CAVIN proteins (CAVIN1/2/3/4) to the caveolae (By similarity). Interacts directly with G-protein alpha subunits and can functionally regulate their activity (By similarity). Involved in the costimulatory signal essential for T-cell receptor (TCR)-mediated T-cell activation. Its binding to DPP4 induces T-cell proliferation and NF-kappa-B activation in a T-cell receptor/CD3-dependent manner (By similarity). Recruits CTNNB1 to caveolar membranes and may regulate CTNNB1-mediated signaling through the Wnt pathway (By similarity). Negatively regulates TGFB1-mediated activation of SMAD2/3 by mediating the internalization of TGFBR1 from membrane rafts leading to its subsequent degradation (By similarity). Binds 20(S)-hydroxycholesterol (20(S)-OHC) (By similarity).</text>
</comment>
<comment type="subunit">
    <text evidence="2 3 4 5">Homooligomer. Interacts with GLIPR2. Interacts with NOSTRIN (By similarity). Interacts with SNAP25 and STX1A (By similarity). Interacts (via the N-terminus) with DPP4; the interaction is direct (By similarity). Interacts with CTNNB1, CDH1 and JUP. Interacts with PACSIN2; this interaction induces membrane tubulation (By similarity). Interacts with SLC7A9 (By similarity). Interacts with BMX and BTK. Interacts with TGFBR1. Interacts with CAVIN3 (via leucine-zipper domain) in a cholesterol-sensitive manner. Interacts with CAVIN1. Interacts with EHD2 in a cholesterol-dependent manner. Forms a ternary complex with UBXN6 and VCP; mediates CAV1 targeting to lysosomes for degradation. Interacts with ABCG1; this interaction regulates ABCG1-mediated cholesterol efflux (By similarity). Interacts with NEU3; this interaction enhances NEU3 sialidase activity within caveola. Interacts (via C-terminus) with SPRY1, SPRY2 (via C-terminus), SPRY3, and SPRY4 (By similarity). Interacts with IGFBP5; this interaction allows trafficking of IGFBP5 from the plasma membrane to the nucleus (By similarity).</text>
</comment>
<comment type="subcellular location">
    <subcellularLocation>
        <location evidence="1">Golgi apparatus membrane</location>
        <topology evidence="1">Peripheral membrane protein</topology>
    </subcellularLocation>
    <subcellularLocation>
        <location evidence="1">Cell membrane</location>
        <topology evidence="1">Peripheral membrane protein</topology>
    </subcellularLocation>
    <subcellularLocation>
        <location evidence="3">Membrane</location>
        <location evidence="3">Caveola</location>
        <topology evidence="1">Peripheral membrane protein</topology>
    </subcellularLocation>
    <subcellularLocation>
        <location evidence="4">Membrane raft</location>
    </subcellularLocation>
    <text evidence="1">Colocalized with DPP4 in membrane rafts. Potential hairpin-like structure in the membrane. Membrane protein of caveolae (By similarity).</text>
</comment>
<comment type="PTM">
    <text evidence="4">Phosphorylated at Tyr-14 by ABL1 in response to oxidative stress.</text>
</comment>
<comment type="PTM">
    <text evidence="4">Ubiquitinated. Undergo monoubiquitination and multi- and/or polyubiquitination. Monoubiquitination of N-terminal lysines promotes integration in a ternary complex with UBXN6 and VCP which promotes oligomeric CAV1 targeting to lysosomes for degradation. Ubiquitinated by ZNRF1; leading to degradation and modulation of the TLR4-mediated immune response.</text>
</comment>
<comment type="similarity">
    <text evidence="7">Belongs to the caveolin family.</text>
</comment>
<keyword id="KW-0007">Acetylation</keyword>
<keyword id="KW-1003">Cell membrane</keyword>
<keyword id="KW-0333">Golgi apparatus</keyword>
<keyword id="KW-1017">Isopeptide bond</keyword>
<keyword id="KW-0449">Lipoprotein</keyword>
<keyword id="KW-0472">Membrane</keyword>
<keyword id="KW-0564">Palmitate</keyword>
<keyword id="KW-0597">Phosphoprotein</keyword>
<keyword id="KW-0832">Ubl conjugation</keyword>
<evidence type="ECO:0000250" key="1"/>
<evidence type="ECO:0000250" key="2">
    <source>
        <dbReference type="UniProtKB" id="P41350"/>
    </source>
</evidence>
<evidence type="ECO:0000250" key="3">
    <source>
        <dbReference type="UniProtKB" id="P49817"/>
    </source>
</evidence>
<evidence type="ECO:0000250" key="4">
    <source>
        <dbReference type="UniProtKB" id="Q03135"/>
    </source>
</evidence>
<evidence type="ECO:0000250" key="5">
    <source>
        <dbReference type="UniProtKB" id="Q2IBA5"/>
    </source>
</evidence>
<evidence type="ECO:0000255" key="6"/>
<evidence type="ECO:0000305" key="7"/>
<proteinExistence type="inferred from homology"/>
<feature type="initiator methionine" description="Removed" evidence="4">
    <location>
        <position position="1"/>
    </location>
</feature>
<feature type="chain" id="PRO_0000226331" description="Caveolin-1">
    <location>
        <begin position="2"/>
        <end position="178"/>
    </location>
</feature>
<feature type="topological domain" description="Cytoplasmic" evidence="6">
    <location>
        <begin position="2"/>
        <end position="104"/>
    </location>
</feature>
<feature type="intramembrane region" description="Helical" evidence="6">
    <location>
        <begin position="105"/>
        <end position="125"/>
    </location>
</feature>
<feature type="topological domain" description="Cytoplasmic" evidence="6">
    <location>
        <begin position="126"/>
        <end position="178"/>
    </location>
</feature>
<feature type="region of interest" description="Required for homooligomerization" evidence="4">
    <location>
        <begin position="2"/>
        <end position="94"/>
    </location>
</feature>
<feature type="region of interest" description="Interaction with CAVIN3" evidence="4">
    <location>
        <begin position="82"/>
        <end position="94"/>
    </location>
</feature>
<feature type="region of interest" description="Interacts with SPRY1, SPRY2, SPRY3 and SPRY4" evidence="3">
    <location>
        <begin position="131"/>
        <end position="142"/>
    </location>
</feature>
<feature type="region of interest" description="Interacts with SPRY1, SPRY2, and SPRY4" evidence="3">
    <location>
        <begin position="149"/>
        <end position="160"/>
    </location>
</feature>
<feature type="region of interest" description="Interacts with SPRY1, SPRY2, SPRY3 and SPRY4" evidence="3">
    <location>
        <begin position="167"/>
        <end position="178"/>
    </location>
</feature>
<feature type="modified residue" description="N-acetylserine" evidence="4">
    <location>
        <position position="2"/>
    </location>
</feature>
<feature type="modified residue" description="Phosphoserine" evidence="2">
    <location>
        <position position="2"/>
    </location>
</feature>
<feature type="modified residue" description="N6-acetyllysine; alternate" evidence="4">
    <location>
        <position position="5"/>
    </location>
</feature>
<feature type="modified residue" description="Phosphotyrosine" evidence="4">
    <location>
        <position position="6"/>
    </location>
</feature>
<feature type="modified residue" description="Phosphoserine" evidence="3">
    <location>
        <position position="9"/>
    </location>
</feature>
<feature type="modified residue" description="Phosphotyrosine; by ABL1" evidence="3">
    <location>
        <position position="14"/>
    </location>
</feature>
<feature type="modified residue" description="Phosphotyrosine" evidence="4">
    <location>
        <position position="25"/>
    </location>
</feature>
<feature type="lipid moiety-binding region" description="S-palmitoyl cysteine" evidence="1">
    <location>
        <position position="133"/>
    </location>
</feature>
<feature type="lipid moiety-binding region" description="S-palmitoyl cysteine" evidence="1">
    <location>
        <position position="143"/>
    </location>
</feature>
<feature type="lipid moiety-binding region" description="S-palmitoyl cysteine" evidence="1">
    <location>
        <position position="156"/>
    </location>
</feature>
<feature type="cross-link" description="Glycyl lysine isopeptide (Lys-Gly) (interchain with G-Cter in ubiquitin); alternate" evidence="4">
    <location>
        <position position="5"/>
    </location>
</feature>
<feature type="cross-link" description="Glycyl lysine isopeptide (Lys-Gly) (interchain with G-Cter in ubiquitin)" evidence="4">
    <location>
        <position position="26"/>
    </location>
</feature>
<feature type="cross-link" description="Glycyl lysine isopeptide (Lys-Gly) (interchain with G-Cter in ubiquitin)" evidence="4">
    <location>
        <position position="30"/>
    </location>
</feature>
<feature type="cross-link" description="Glycyl lysine isopeptide (Lys-Gly) (interchain with G-Cter in ubiquitin)" evidence="4">
    <location>
        <position position="39"/>
    </location>
</feature>
<feature type="cross-link" description="Glycyl lysine isopeptide (Lys-Gly) (interchain with G-Cter in ubiquitin)" evidence="4">
    <location>
        <position position="47"/>
    </location>
</feature>
<feature type="cross-link" description="Glycyl lysine isopeptide (Lys-Gly) (interchain with G-Cter in ubiquitin)" evidence="4">
    <location>
        <position position="57"/>
    </location>
</feature>
<name>CAV1_DIDVI</name>